<accession>Q89K89</accession>
<organism>
    <name type="scientific">Bradyrhizobium diazoefficiens (strain JCM 10833 / BCRC 13528 / IAM 13628 / NBRC 14792 / USDA 110)</name>
    <dbReference type="NCBI Taxonomy" id="224911"/>
    <lineage>
        <taxon>Bacteria</taxon>
        <taxon>Pseudomonadati</taxon>
        <taxon>Pseudomonadota</taxon>
        <taxon>Alphaproteobacteria</taxon>
        <taxon>Hyphomicrobiales</taxon>
        <taxon>Nitrobacteraceae</taxon>
        <taxon>Bradyrhizobium</taxon>
    </lineage>
</organism>
<comment type="function">
    <text evidence="1">Catalyzes the condensation reaction of fatty acid synthesis by the addition to an acyl acceptor of two carbons from malonyl-ACP. Catalyzes the first condensation reaction which initiates fatty acid synthesis and may therefore play a role in governing the total rate of fatty acid production. Possesses both acetoacetyl-ACP synthase and acetyl transacylase activities. Its substrate specificity determines the biosynthesis of branched-chain and/or straight-chain of fatty acids.</text>
</comment>
<comment type="catalytic activity">
    <reaction evidence="1">
        <text>malonyl-[ACP] + acetyl-CoA + H(+) = 3-oxobutanoyl-[ACP] + CO2 + CoA</text>
        <dbReference type="Rhea" id="RHEA:12080"/>
        <dbReference type="Rhea" id="RHEA-COMP:9623"/>
        <dbReference type="Rhea" id="RHEA-COMP:9625"/>
        <dbReference type="ChEBI" id="CHEBI:15378"/>
        <dbReference type="ChEBI" id="CHEBI:16526"/>
        <dbReference type="ChEBI" id="CHEBI:57287"/>
        <dbReference type="ChEBI" id="CHEBI:57288"/>
        <dbReference type="ChEBI" id="CHEBI:78449"/>
        <dbReference type="ChEBI" id="CHEBI:78450"/>
        <dbReference type="EC" id="2.3.1.180"/>
    </reaction>
</comment>
<comment type="pathway">
    <text evidence="1">Lipid metabolism; fatty acid biosynthesis.</text>
</comment>
<comment type="subunit">
    <text evidence="1">Homodimer.</text>
</comment>
<comment type="subcellular location">
    <subcellularLocation>
        <location evidence="1">Cytoplasm</location>
    </subcellularLocation>
</comment>
<comment type="domain">
    <text evidence="1">The last Arg residue of the ACP-binding site is essential for the weak association between ACP/AcpP and FabH.</text>
</comment>
<comment type="similarity">
    <text evidence="1">Belongs to the thiolase-like superfamily. FabH family.</text>
</comment>
<reference key="1">
    <citation type="journal article" date="2002" name="DNA Res.">
        <title>Complete genomic sequence of nitrogen-fixing symbiotic bacterium Bradyrhizobium japonicum USDA110.</title>
        <authorList>
            <person name="Kaneko T."/>
            <person name="Nakamura Y."/>
            <person name="Sato S."/>
            <person name="Minamisawa K."/>
            <person name="Uchiumi T."/>
            <person name="Sasamoto S."/>
            <person name="Watanabe A."/>
            <person name="Idesawa K."/>
            <person name="Iriguchi M."/>
            <person name="Kawashima K."/>
            <person name="Kohara M."/>
            <person name="Matsumoto M."/>
            <person name="Shimpo S."/>
            <person name="Tsuruoka H."/>
            <person name="Wada T."/>
            <person name="Yamada M."/>
            <person name="Tabata S."/>
        </authorList>
    </citation>
    <scope>NUCLEOTIDE SEQUENCE [LARGE SCALE GENOMIC DNA]</scope>
    <source>
        <strain>JCM 10833 / BCRC 13528 / IAM 13628 / NBRC 14792 / USDA 110</strain>
    </source>
</reference>
<evidence type="ECO:0000255" key="1">
    <source>
        <dbReference type="HAMAP-Rule" id="MF_01815"/>
    </source>
</evidence>
<gene>
    <name evidence="1" type="primary">fabH</name>
    <name type="ordered locus">bll5020</name>
</gene>
<sequence length="326" mass="34634">MTKIRSVVLGCGSYLPEQVVTNAQLAARIDTSDEWIVQRTGIRERHIAAEGEFTSHLAIKAAQAALTDAGVDAQSIDLIVLATSTPDNTFPATAVAVQHGLGINHGAAFDLQAVCSGFVFALATADNFLRTGAFKRALVIGAETFSRILDWNDRGTCVLFGDGAGAVVLEAQEQPGSAATDRGVVTTHLRSDGRHKAKLFVDGGPSSTQTVGHLRMEGREVFKHAVGMITDVIVDAFEATGLNADSIDWFVPHQANKRIIDASAHKLHIAPEKVVLTVDRHGNTSAASIPLALAVARKDGRIKRGDLILLEAMGGGFTWGSALVRW</sequence>
<keyword id="KW-0012">Acyltransferase</keyword>
<keyword id="KW-0963">Cytoplasm</keyword>
<keyword id="KW-0275">Fatty acid biosynthesis</keyword>
<keyword id="KW-0276">Fatty acid metabolism</keyword>
<keyword id="KW-0444">Lipid biosynthesis</keyword>
<keyword id="KW-0443">Lipid metabolism</keyword>
<keyword id="KW-0511">Multifunctional enzyme</keyword>
<keyword id="KW-1185">Reference proteome</keyword>
<keyword id="KW-0808">Transferase</keyword>
<feature type="chain" id="PRO_0000110406" description="Beta-ketoacyl-[acyl-carrier-protein] synthase III">
    <location>
        <begin position="1"/>
        <end position="326"/>
    </location>
</feature>
<feature type="region of interest" description="ACP-binding" evidence="1">
    <location>
        <begin position="254"/>
        <end position="258"/>
    </location>
</feature>
<feature type="active site" evidence="1">
    <location>
        <position position="115"/>
    </location>
</feature>
<feature type="active site" evidence="1">
    <location>
        <position position="253"/>
    </location>
</feature>
<feature type="active site" evidence="1">
    <location>
        <position position="283"/>
    </location>
</feature>
<proteinExistence type="inferred from homology"/>
<dbReference type="EC" id="2.3.1.180" evidence="1"/>
<dbReference type="EMBL" id="BA000040">
    <property type="protein sequence ID" value="BAC50285.1"/>
    <property type="molecule type" value="Genomic_DNA"/>
</dbReference>
<dbReference type="RefSeq" id="NP_771660.1">
    <property type="nucleotide sequence ID" value="NC_004463.1"/>
</dbReference>
<dbReference type="RefSeq" id="WP_011087781.1">
    <property type="nucleotide sequence ID" value="NC_004463.1"/>
</dbReference>
<dbReference type="SMR" id="Q89K89"/>
<dbReference type="FunCoup" id="Q89K89">
    <property type="interactions" value="623"/>
</dbReference>
<dbReference type="STRING" id="224911.AAV28_22460"/>
<dbReference type="EnsemblBacteria" id="BAC50285">
    <property type="protein sequence ID" value="BAC50285"/>
    <property type="gene ID" value="BAC50285"/>
</dbReference>
<dbReference type="GeneID" id="46492025"/>
<dbReference type="KEGG" id="bja:bll5020"/>
<dbReference type="PATRIC" id="fig|224911.44.peg.4883"/>
<dbReference type="eggNOG" id="COG0332">
    <property type="taxonomic scope" value="Bacteria"/>
</dbReference>
<dbReference type="HOGENOM" id="CLU_039592_3_1_5"/>
<dbReference type="InParanoid" id="Q89K89"/>
<dbReference type="OrthoDB" id="9815506at2"/>
<dbReference type="PhylomeDB" id="Q89K89"/>
<dbReference type="UniPathway" id="UPA00094"/>
<dbReference type="Proteomes" id="UP000002526">
    <property type="component" value="Chromosome"/>
</dbReference>
<dbReference type="GO" id="GO:0005737">
    <property type="term" value="C:cytoplasm"/>
    <property type="evidence" value="ECO:0007669"/>
    <property type="project" value="UniProtKB-SubCell"/>
</dbReference>
<dbReference type="GO" id="GO:0004315">
    <property type="term" value="F:3-oxoacyl-[acyl-carrier-protein] synthase activity"/>
    <property type="evidence" value="ECO:0007669"/>
    <property type="project" value="InterPro"/>
</dbReference>
<dbReference type="GO" id="GO:0033818">
    <property type="term" value="F:beta-ketoacyl-acyl-carrier-protein synthase III activity"/>
    <property type="evidence" value="ECO:0007669"/>
    <property type="project" value="UniProtKB-UniRule"/>
</dbReference>
<dbReference type="GO" id="GO:0006633">
    <property type="term" value="P:fatty acid biosynthetic process"/>
    <property type="evidence" value="ECO:0007669"/>
    <property type="project" value="UniProtKB-UniRule"/>
</dbReference>
<dbReference type="CDD" id="cd00830">
    <property type="entry name" value="KAS_III"/>
    <property type="match status" value="1"/>
</dbReference>
<dbReference type="FunFam" id="3.40.47.10:FF:000004">
    <property type="entry name" value="3-oxoacyl-[acyl-carrier-protein] synthase 3"/>
    <property type="match status" value="1"/>
</dbReference>
<dbReference type="Gene3D" id="3.40.47.10">
    <property type="match status" value="1"/>
</dbReference>
<dbReference type="HAMAP" id="MF_01815">
    <property type="entry name" value="FabH"/>
    <property type="match status" value="1"/>
</dbReference>
<dbReference type="InterPro" id="IPR013747">
    <property type="entry name" value="ACP_syn_III_C"/>
</dbReference>
<dbReference type="InterPro" id="IPR013751">
    <property type="entry name" value="ACP_syn_III_N"/>
</dbReference>
<dbReference type="InterPro" id="IPR004655">
    <property type="entry name" value="FabH"/>
</dbReference>
<dbReference type="InterPro" id="IPR016039">
    <property type="entry name" value="Thiolase-like"/>
</dbReference>
<dbReference type="NCBIfam" id="TIGR00747">
    <property type="entry name" value="fabH"/>
    <property type="match status" value="1"/>
</dbReference>
<dbReference type="NCBIfam" id="NF006829">
    <property type="entry name" value="PRK09352.1"/>
    <property type="match status" value="1"/>
</dbReference>
<dbReference type="PANTHER" id="PTHR43091">
    <property type="entry name" value="3-OXOACYL-[ACYL-CARRIER-PROTEIN] SYNTHASE"/>
    <property type="match status" value="1"/>
</dbReference>
<dbReference type="PANTHER" id="PTHR43091:SF1">
    <property type="entry name" value="BETA-KETOACYL-[ACYL-CARRIER-PROTEIN] SYNTHASE III, CHLOROPLASTIC"/>
    <property type="match status" value="1"/>
</dbReference>
<dbReference type="Pfam" id="PF08545">
    <property type="entry name" value="ACP_syn_III"/>
    <property type="match status" value="1"/>
</dbReference>
<dbReference type="Pfam" id="PF08541">
    <property type="entry name" value="ACP_syn_III_C"/>
    <property type="match status" value="1"/>
</dbReference>
<dbReference type="SUPFAM" id="SSF53901">
    <property type="entry name" value="Thiolase-like"/>
    <property type="match status" value="1"/>
</dbReference>
<protein>
    <recommendedName>
        <fullName evidence="1">Beta-ketoacyl-[acyl-carrier-protein] synthase III</fullName>
        <shortName evidence="1">Beta-ketoacyl-ACP synthase III</shortName>
        <shortName evidence="1">KAS III</shortName>
        <ecNumber evidence="1">2.3.1.180</ecNumber>
    </recommendedName>
    <alternativeName>
        <fullName evidence="1">3-oxoacyl-[acyl-carrier-protein] synthase 3</fullName>
    </alternativeName>
    <alternativeName>
        <fullName evidence="1">3-oxoacyl-[acyl-carrier-protein] synthase III</fullName>
    </alternativeName>
</protein>
<name>FABH_BRADU</name>